<sequence length="184" mass="19788">MEGSEEHGETSKAPLSRGVSKGVSILDVILRFVAIIGTLASAIAMGTTNQTLPFFTQFIRFKAQYSDLPTLTFFVVANSIVSAYLILSLPLSIVHVIRSRAKYSRLILIFFDAAMLALVTAGASAAAAIVYLAHKGNARANWLAICQQFDSFCERISGSLIGSFAAMVVLVLLIFLSAIALARR</sequence>
<comment type="function">
    <text evidence="1">Regulates membrane-cell wall junctions and localized cell wall deposition. Required for establishment of the Casparian strip membrane domain (CSD) and the subsequent formation of Casparian strips, a cell wall modification of the root endodermis that determines an apoplastic barrier between the intraorganismal apoplasm and the extraorganismal apoplasm and prevents lateral diffusion (By similarity).</text>
</comment>
<comment type="subunit">
    <text evidence="1">Homodimer and heterodimers.</text>
</comment>
<comment type="subcellular location">
    <subcellularLocation>
        <location evidence="1">Cell membrane</location>
        <topology evidence="1">Multi-pass membrane protein</topology>
    </subcellularLocation>
    <text evidence="1">Very restricted localization following a belt shape within the plasma membrane which coincides with the position of the Casparian strip membrane domain in the root endodermis.</text>
</comment>
<comment type="similarity">
    <text evidence="3">Belongs to the Casparian strip membrane proteins (CASP) family.</text>
</comment>
<name>CASP3_ORYSJ</name>
<accession>Q67X40</accession>
<accession>A0A0P0WUD1</accession>
<accession>C7J3R5</accession>
<dbReference type="EMBL" id="AP003509">
    <property type="protein sequence ID" value="BAD37279.1"/>
    <property type="molecule type" value="Genomic_DNA"/>
</dbReference>
<dbReference type="EMBL" id="AP008212">
    <property type="protein sequence ID" value="BAH93404.1"/>
    <property type="molecule type" value="Genomic_DNA"/>
</dbReference>
<dbReference type="EMBL" id="AP014962">
    <property type="protein sequence ID" value="BAS96908.1"/>
    <property type="molecule type" value="Genomic_DNA"/>
</dbReference>
<dbReference type="EMBL" id="CM000143">
    <property type="protein sequence ID" value="EAZ36366.1"/>
    <property type="molecule type" value="Genomic_DNA"/>
</dbReference>
<dbReference type="SMR" id="Q67X40"/>
<dbReference type="FunCoup" id="Q67X40">
    <property type="interactions" value="2195"/>
</dbReference>
<dbReference type="PaxDb" id="39947-Q67X40"/>
<dbReference type="EnsemblPlants" id="Os06t0231050-00">
    <property type="protein sequence ID" value="Os06t0231050-00"/>
    <property type="gene ID" value="Os06g0231050"/>
</dbReference>
<dbReference type="GeneID" id="9272689"/>
<dbReference type="Gramene" id="Os06t0231050-00">
    <property type="protein sequence ID" value="Os06t0231050-00"/>
    <property type="gene ID" value="Os06g0231050"/>
</dbReference>
<dbReference type="KEGG" id="dosa:Os06g0231050"/>
<dbReference type="KEGG" id="osa:9272689"/>
<dbReference type="eggNOG" id="ENOG502RXTK">
    <property type="taxonomic scope" value="Eukaryota"/>
</dbReference>
<dbReference type="HOGENOM" id="CLU_066104_3_2_1"/>
<dbReference type="InParanoid" id="Q67X40"/>
<dbReference type="OMA" id="ANWLSIC"/>
<dbReference type="OrthoDB" id="753675at2759"/>
<dbReference type="Proteomes" id="UP000000763">
    <property type="component" value="Chromosome 6"/>
</dbReference>
<dbReference type="Proteomes" id="UP000007752">
    <property type="component" value="Chromosome 6"/>
</dbReference>
<dbReference type="Proteomes" id="UP000059680">
    <property type="component" value="Chromosome 6"/>
</dbReference>
<dbReference type="GO" id="GO:0005886">
    <property type="term" value="C:plasma membrane"/>
    <property type="evidence" value="ECO:0000318"/>
    <property type="project" value="GO_Central"/>
</dbReference>
<dbReference type="GO" id="GO:0071555">
    <property type="term" value="P:cell wall organization"/>
    <property type="evidence" value="ECO:0007669"/>
    <property type="project" value="UniProtKB-KW"/>
</dbReference>
<dbReference type="InterPro" id="IPR006459">
    <property type="entry name" value="CASP/CASPL"/>
</dbReference>
<dbReference type="InterPro" id="IPR006702">
    <property type="entry name" value="CASP_dom"/>
</dbReference>
<dbReference type="InterPro" id="IPR044173">
    <property type="entry name" value="CASPL"/>
</dbReference>
<dbReference type="NCBIfam" id="TIGR01569">
    <property type="entry name" value="A_tha_TIGR01569"/>
    <property type="match status" value="1"/>
</dbReference>
<dbReference type="PANTHER" id="PTHR36488:SF12">
    <property type="entry name" value="CASP-LIKE PROTEIN"/>
    <property type="match status" value="1"/>
</dbReference>
<dbReference type="PANTHER" id="PTHR36488">
    <property type="entry name" value="CASP-LIKE PROTEIN 1U1"/>
    <property type="match status" value="1"/>
</dbReference>
<dbReference type="Pfam" id="PF04535">
    <property type="entry name" value="CASP_dom"/>
    <property type="match status" value="1"/>
</dbReference>
<feature type="chain" id="PRO_0000370290" description="Casparian strip membrane protein 3">
    <location>
        <begin position="1"/>
        <end position="184"/>
    </location>
</feature>
<feature type="topological domain" description="Cytoplasmic" evidence="2">
    <location>
        <begin position="1"/>
        <end position="24"/>
    </location>
</feature>
<feature type="transmembrane region" description="Helical" evidence="2">
    <location>
        <begin position="25"/>
        <end position="45"/>
    </location>
</feature>
<feature type="topological domain" description="Extracellular" evidence="2">
    <location>
        <begin position="46"/>
        <end position="72"/>
    </location>
</feature>
<feature type="transmembrane region" description="Helical" evidence="2">
    <location>
        <begin position="73"/>
        <end position="93"/>
    </location>
</feature>
<feature type="topological domain" description="Cytoplasmic" evidence="2">
    <location>
        <begin position="94"/>
        <end position="105"/>
    </location>
</feature>
<feature type="transmembrane region" description="Helical" evidence="2">
    <location>
        <begin position="106"/>
        <end position="126"/>
    </location>
</feature>
<feature type="topological domain" description="Extracellular" evidence="2">
    <location>
        <begin position="127"/>
        <end position="159"/>
    </location>
</feature>
<feature type="transmembrane region" description="Helical" evidence="2">
    <location>
        <begin position="160"/>
        <end position="180"/>
    </location>
</feature>
<feature type="topological domain" description="Cytoplasmic" evidence="2">
    <location>
        <begin position="181"/>
        <end position="184"/>
    </location>
</feature>
<feature type="glycosylation site" description="N-linked (GlcNAc...) asparagine" evidence="2">
    <location>
        <position position="49"/>
    </location>
</feature>
<evidence type="ECO:0000250" key="1"/>
<evidence type="ECO:0000255" key="2"/>
<evidence type="ECO:0000305" key="3"/>
<gene>
    <name type="ordered locus">Os06g0231050</name>
    <name type="ordered locus">LOC_Os06g12500</name>
    <name type="ORF">OsJ_019849</name>
    <name type="ORF">P0525F01.34</name>
</gene>
<keyword id="KW-1003">Cell membrane</keyword>
<keyword id="KW-0961">Cell wall biogenesis/degradation</keyword>
<keyword id="KW-0325">Glycoprotein</keyword>
<keyword id="KW-0472">Membrane</keyword>
<keyword id="KW-1185">Reference proteome</keyword>
<keyword id="KW-0812">Transmembrane</keyword>
<keyword id="KW-1133">Transmembrane helix</keyword>
<reference key="1">
    <citation type="journal article" date="2005" name="Nature">
        <title>The map-based sequence of the rice genome.</title>
        <authorList>
            <consortium name="International rice genome sequencing project (IRGSP)"/>
        </authorList>
    </citation>
    <scope>NUCLEOTIDE SEQUENCE [LARGE SCALE GENOMIC DNA]</scope>
    <source>
        <strain>cv. Nipponbare</strain>
    </source>
</reference>
<reference key="2">
    <citation type="journal article" date="2008" name="Nucleic Acids Res.">
        <title>The rice annotation project database (RAP-DB): 2008 update.</title>
        <authorList>
            <consortium name="The rice annotation project (RAP)"/>
        </authorList>
    </citation>
    <scope>GENOME REANNOTATION</scope>
    <source>
        <strain>cv. Nipponbare</strain>
    </source>
</reference>
<reference key="3">
    <citation type="journal article" date="2013" name="Rice">
        <title>Improvement of the Oryza sativa Nipponbare reference genome using next generation sequence and optical map data.</title>
        <authorList>
            <person name="Kawahara Y."/>
            <person name="de la Bastide M."/>
            <person name="Hamilton J.P."/>
            <person name="Kanamori H."/>
            <person name="McCombie W.R."/>
            <person name="Ouyang S."/>
            <person name="Schwartz D.C."/>
            <person name="Tanaka T."/>
            <person name="Wu J."/>
            <person name="Zhou S."/>
            <person name="Childs K.L."/>
            <person name="Davidson R.M."/>
            <person name="Lin H."/>
            <person name="Quesada-Ocampo L."/>
            <person name="Vaillancourt B."/>
            <person name="Sakai H."/>
            <person name="Lee S.S."/>
            <person name="Kim J."/>
            <person name="Numa H."/>
            <person name="Itoh T."/>
            <person name="Buell C.R."/>
            <person name="Matsumoto T."/>
        </authorList>
    </citation>
    <scope>GENOME REANNOTATION</scope>
    <source>
        <strain>cv. Nipponbare</strain>
    </source>
</reference>
<reference key="4">
    <citation type="journal article" date="2005" name="PLoS Biol.">
        <title>The genomes of Oryza sativa: a history of duplications.</title>
        <authorList>
            <person name="Yu J."/>
            <person name="Wang J."/>
            <person name="Lin W."/>
            <person name="Li S."/>
            <person name="Li H."/>
            <person name="Zhou J."/>
            <person name="Ni P."/>
            <person name="Dong W."/>
            <person name="Hu S."/>
            <person name="Zeng C."/>
            <person name="Zhang J."/>
            <person name="Zhang Y."/>
            <person name="Li R."/>
            <person name="Xu Z."/>
            <person name="Li S."/>
            <person name="Li X."/>
            <person name="Zheng H."/>
            <person name="Cong L."/>
            <person name="Lin L."/>
            <person name="Yin J."/>
            <person name="Geng J."/>
            <person name="Li G."/>
            <person name="Shi J."/>
            <person name="Liu J."/>
            <person name="Lv H."/>
            <person name="Li J."/>
            <person name="Wang J."/>
            <person name="Deng Y."/>
            <person name="Ran L."/>
            <person name="Shi X."/>
            <person name="Wang X."/>
            <person name="Wu Q."/>
            <person name="Li C."/>
            <person name="Ren X."/>
            <person name="Wang J."/>
            <person name="Wang X."/>
            <person name="Li D."/>
            <person name="Liu D."/>
            <person name="Zhang X."/>
            <person name="Ji Z."/>
            <person name="Zhao W."/>
            <person name="Sun Y."/>
            <person name="Zhang Z."/>
            <person name="Bao J."/>
            <person name="Han Y."/>
            <person name="Dong L."/>
            <person name="Ji J."/>
            <person name="Chen P."/>
            <person name="Wu S."/>
            <person name="Liu J."/>
            <person name="Xiao Y."/>
            <person name="Bu D."/>
            <person name="Tan J."/>
            <person name="Yang L."/>
            <person name="Ye C."/>
            <person name="Zhang J."/>
            <person name="Xu J."/>
            <person name="Zhou Y."/>
            <person name="Yu Y."/>
            <person name="Zhang B."/>
            <person name="Zhuang S."/>
            <person name="Wei H."/>
            <person name="Liu B."/>
            <person name="Lei M."/>
            <person name="Yu H."/>
            <person name="Li Y."/>
            <person name="Xu H."/>
            <person name="Wei S."/>
            <person name="He X."/>
            <person name="Fang L."/>
            <person name="Zhang Z."/>
            <person name="Zhang Y."/>
            <person name="Huang X."/>
            <person name="Su Z."/>
            <person name="Tong W."/>
            <person name="Li J."/>
            <person name="Tong Z."/>
            <person name="Li S."/>
            <person name="Ye J."/>
            <person name="Wang L."/>
            <person name="Fang L."/>
            <person name="Lei T."/>
            <person name="Chen C.-S."/>
            <person name="Chen H.-C."/>
            <person name="Xu Z."/>
            <person name="Li H."/>
            <person name="Huang H."/>
            <person name="Zhang F."/>
            <person name="Xu H."/>
            <person name="Li N."/>
            <person name="Zhao C."/>
            <person name="Li S."/>
            <person name="Dong L."/>
            <person name="Huang Y."/>
            <person name="Li L."/>
            <person name="Xi Y."/>
            <person name="Qi Q."/>
            <person name="Li W."/>
            <person name="Zhang B."/>
            <person name="Hu W."/>
            <person name="Zhang Y."/>
            <person name="Tian X."/>
            <person name="Jiao Y."/>
            <person name="Liang X."/>
            <person name="Jin J."/>
            <person name="Gao L."/>
            <person name="Zheng W."/>
            <person name="Hao B."/>
            <person name="Liu S.-M."/>
            <person name="Wang W."/>
            <person name="Yuan L."/>
            <person name="Cao M."/>
            <person name="McDermott J."/>
            <person name="Samudrala R."/>
            <person name="Wang J."/>
            <person name="Wong G.K.-S."/>
            <person name="Yang H."/>
        </authorList>
    </citation>
    <scope>NUCLEOTIDE SEQUENCE [LARGE SCALE GENOMIC DNA]</scope>
    <source>
        <strain>cv. Nipponbare</strain>
    </source>
</reference>
<reference key="5">
    <citation type="journal article" date="2014" name="Plant Physiol.">
        <title>Functional and evolutionary analysis of the CASPARIAN STRIP MEMBRANE DOMAIN PROTEIN family.</title>
        <authorList>
            <person name="Roppolo D."/>
            <person name="Boeckmann B."/>
            <person name="Pfister A."/>
            <person name="Boutet E."/>
            <person name="Rubio M.C."/>
            <person name="Denervaud-Tendon V."/>
            <person name="Vermeer J.E."/>
            <person name="Gheyselinck J."/>
            <person name="Xenarios I."/>
            <person name="Geldner N."/>
        </authorList>
    </citation>
    <scope>GENE FAMILY</scope>
    <scope>NOMENCLATURE</scope>
</reference>
<proteinExistence type="inferred from homology"/>
<protein>
    <recommendedName>
        <fullName>Casparian strip membrane protein 3</fullName>
        <shortName>OsCASP3</shortName>
    </recommendedName>
</protein>
<organism>
    <name type="scientific">Oryza sativa subsp. japonica</name>
    <name type="common">Rice</name>
    <dbReference type="NCBI Taxonomy" id="39947"/>
    <lineage>
        <taxon>Eukaryota</taxon>
        <taxon>Viridiplantae</taxon>
        <taxon>Streptophyta</taxon>
        <taxon>Embryophyta</taxon>
        <taxon>Tracheophyta</taxon>
        <taxon>Spermatophyta</taxon>
        <taxon>Magnoliopsida</taxon>
        <taxon>Liliopsida</taxon>
        <taxon>Poales</taxon>
        <taxon>Poaceae</taxon>
        <taxon>BOP clade</taxon>
        <taxon>Oryzoideae</taxon>
        <taxon>Oryzeae</taxon>
        <taxon>Oryzinae</taxon>
        <taxon>Oryza</taxon>
        <taxon>Oryza sativa</taxon>
    </lineage>
</organism>